<proteinExistence type="inferred from homology"/>
<sequence>MSRTKDPAKQAEDLREKLRYHEHRYYVLDDPEISDADYDVMMNELKALEAKHPELLTPDSPTQRVGGKPREGFVKVAHSAPMLSLDNAYNEEELRDWARRVEELSGKAEIEYECELKLDGLSMALRYQDARFVLAVTRGDGSIGEDVTLNLRTVKSVPLGVSSATLKKTHMLGDFEVRGEVIFPTKSFEKMNEDREKQGLAKFANPRNAAAGAVRVLEPNITAQRRLDFYAYFLLVDGRVHIDRQSEALDTLEKLGFKVNSNRAVFKSIDDVLKFIHKKEEDREKLPYEIDGVVIKVNSTALWQRLGFTGKAPRWAIAYKYAARAAVTQVEDILVQVGRTGKLTPVAALKPVPIGGTTVSRATLHNMDEIDRLGLLIGDWVQVERGGDVIPKVVKVIDDKDHPRGKKKFKMPERCPECGGHVVRTEGEADHRCVNANCPAKLRESILHFASRGVMNIEGMGDSLVNQLVDRGLVKNVADIYELDEEKLLSLERMGKKSAQNILDEIKGTKKLPLERVIYGLGIRMVGERTAQFLAEHFGSLDGVMKATEEELLEVEEVGPRIAQSIHEFFAEPSNRELVKRLEAAGLQFKGVKKERGTALAGQTFVLTGSLPTYSRDEAKKLIEDAGGKVSGSVSKKTNYVVAGEEAGSKLDKARDLGVAVIDEDALKKLLGK</sequence>
<comment type="function">
    <text evidence="1">DNA ligase that catalyzes the formation of phosphodiester linkages between 5'-phosphoryl and 3'-hydroxyl groups in double-stranded DNA using NAD as a coenzyme and as the energy source for the reaction. It is essential for DNA replication and repair of damaged DNA.</text>
</comment>
<comment type="catalytic activity">
    <reaction evidence="1">
        <text>NAD(+) + (deoxyribonucleotide)n-3'-hydroxyl + 5'-phospho-(deoxyribonucleotide)m = (deoxyribonucleotide)n+m + AMP + beta-nicotinamide D-nucleotide.</text>
        <dbReference type="EC" id="6.5.1.2"/>
    </reaction>
</comment>
<comment type="cofactor">
    <cofactor evidence="1">
        <name>Mg(2+)</name>
        <dbReference type="ChEBI" id="CHEBI:18420"/>
    </cofactor>
    <cofactor evidence="1">
        <name>Mn(2+)</name>
        <dbReference type="ChEBI" id="CHEBI:29035"/>
    </cofactor>
</comment>
<comment type="similarity">
    <text evidence="1">Belongs to the NAD-dependent DNA ligase family. LigA subfamily.</text>
</comment>
<organism>
    <name type="scientific">Koribacter versatilis (strain Ellin345)</name>
    <dbReference type="NCBI Taxonomy" id="204669"/>
    <lineage>
        <taxon>Bacteria</taxon>
        <taxon>Pseudomonadati</taxon>
        <taxon>Acidobacteriota</taxon>
        <taxon>Terriglobia</taxon>
        <taxon>Terriglobales</taxon>
        <taxon>Candidatus Korobacteraceae</taxon>
        <taxon>Candidatus Korobacter</taxon>
    </lineage>
</organism>
<keyword id="KW-0227">DNA damage</keyword>
<keyword id="KW-0234">DNA repair</keyword>
<keyword id="KW-0235">DNA replication</keyword>
<keyword id="KW-0436">Ligase</keyword>
<keyword id="KW-0460">Magnesium</keyword>
<keyword id="KW-0464">Manganese</keyword>
<keyword id="KW-0479">Metal-binding</keyword>
<keyword id="KW-0520">NAD</keyword>
<keyword id="KW-1185">Reference proteome</keyword>
<keyword id="KW-0862">Zinc</keyword>
<dbReference type="EC" id="6.5.1.2" evidence="1"/>
<dbReference type="EMBL" id="CP000360">
    <property type="protein sequence ID" value="ABF43656.1"/>
    <property type="molecule type" value="Genomic_DNA"/>
</dbReference>
<dbReference type="RefSeq" id="WP_011525453.1">
    <property type="nucleotide sequence ID" value="NC_008009.1"/>
</dbReference>
<dbReference type="SMR" id="Q1IHJ4"/>
<dbReference type="STRING" id="204669.Acid345_4656"/>
<dbReference type="EnsemblBacteria" id="ABF43656">
    <property type="protein sequence ID" value="ABF43656"/>
    <property type="gene ID" value="Acid345_4656"/>
</dbReference>
<dbReference type="KEGG" id="aba:Acid345_4656"/>
<dbReference type="eggNOG" id="COG0272">
    <property type="taxonomic scope" value="Bacteria"/>
</dbReference>
<dbReference type="HOGENOM" id="CLU_007764_2_1_0"/>
<dbReference type="OrthoDB" id="9759736at2"/>
<dbReference type="Proteomes" id="UP000002432">
    <property type="component" value="Chromosome"/>
</dbReference>
<dbReference type="GO" id="GO:0003677">
    <property type="term" value="F:DNA binding"/>
    <property type="evidence" value="ECO:0007669"/>
    <property type="project" value="InterPro"/>
</dbReference>
<dbReference type="GO" id="GO:0003911">
    <property type="term" value="F:DNA ligase (NAD+) activity"/>
    <property type="evidence" value="ECO:0007669"/>
    <property type="project" value="UniProtKB-UniRule"/>
</dbReference>
<dbReference type="GO" id="GO:0046872">
    <property type="term" value="F:metal ion binding"/>
    <property type="evidence" value="ECO:0007669"/>
    <property type="project" value="UniProtKB-KW"/>
</dbReference>
<dbReference type="GO" id="GO:0006281">
    <property type="term" value="P:DNA repair"/>
    <property type="evidence" value="ECO:0007669"/>
    <property type="project" value="UniProtKB-KW"/>
</dbReference>
<dbReference type="GO" id="GO:0006260">
    <property type="term" value="P:DNA replication"/>
    <property type="evidence" value="ECO:0007669"/>
    <property type="project" value="UniProtKB-KW"/>
</dbReference>
<dbReference type="CDD" id="cd17748">
    <property type="entry name" value="BRCT_DNA_ligase_like"/>
    <property type="match status" value="1"/>
</dbReference>
<dbReference type="CDD" id="cd00114">
    <property type="entry name" value="LIGANc"/>
    <property type="match status" value="1"/>
</dbReference>
<dbReference type="FunFam" id="1.10.150.20:FF:000006">
    <property type="entry name" value="DNA ligase"/>
    <property type="match status" value="1"/>
</dbReference>
<dbReference type="FunFam" id="1.10.150.20:FF:000007">
    <property type="entry name" value="DNA ligase"/>
    <property type="match status" value="1"/>
</dbReference>
<dbReference type="FunFam" id="1.10.287.610:FF:000002">
    <property type="entry name" value="DNA ligase"/>
    <property type="match status" value="1"/>
</dbReference>
<dbReference type="FunFam" id="2.40.50.140:FF:000012">
    <property type="entry name" value="DNA ligase"/>
    <property type="match status" value="1"/>
</dbReference>
<dbReference type="FunFam" id="3.30.470.30:FF:000001">
    <property type="entry name" value="DNA ligase"/>
    <property type="match status" value="1"/>
</dbReference>
<dbReference type="Gene3D" id="6.20.10.30">
    <property type="match status" value="1"/>
</dbReference>
<dbReference type="Gene3D" id="1.10.150.20">
    <property type="entry name" value="5' to 3' exonuclease, C-terminal subdomain"/>
    <property type="match status" value="2"/>
</dbReference>
<dbReference type="Gene3D" id="3.40.50.10190">
    <property type="entry name" value="BRCT domain"/>
    <property type="match status" value="1"/>
</dbReference>
<dbReference type="Gene3D" id="3.30.470.30">
    <property type="entry name" value="DNA ligase/mRNA capping enzyme"/>
    <property type="match status" value="1"/>
</dbReference>
<dbReference type="Gene3D" id="1.10.287.610">
    <property type="entry name" value="Helix hairpin bin"/>
    <property type="match status" value="1"/>
</dbReference>
<dbReference type="Gene3D" id="2.40.50.140">
    <property type="entry name" value="Nucleic acid-binding proteins"/>
    <property type="match status" value="1"/>
</dbReference>
<dbReference type="HAMAP" id="MF_01588">
    <property type="entry name" value="DNA_ligase_A"/>
    <property type="match status" value="1"/>
</dbReference>
<dbReference type="InterPro" id="IPR001357">
    <property type="entry name" value="BRCT_dom"/>
</dbReference>
<dbReference type="InterPro" id="IPR036420">
    <property type="entry name" value="BRCT_dom_sf"/>
</dbReference>
<dbReference type="InterPro" id="IPR041663">
    <property type="entry name" value="DisA/LigA_HHH"/>
</dbReference>
<dbReference type="InterPro" id="IPR001679">
    <property type="entry name" value="DNA_ligase"/>
</dbReference>
<dbReference type="InterPro" id="IPR033136">
    <property type="entry name" value="DNA_ligase_CS"/>
</dbReference>
<dbReference type="InterPro" id="IPR013839">
    <property type="entry name" value="DNAligase_adenylation"/>
</dbReference>
<dbReference type="InterPro" id="IPR013840">
    <property type="entry name" value="DNAligase_N"/>
</dbReference>
<dbReference type="InterPro" id="IPR003583">
    <property type="entry name" value="Hlx-hairpin-Hlx_DNA-bd_motif"/>
</dbReference>
<dbReference type="InterPro" id="IPR012340">
    <property type="entry name" value="NA-bd_OB-fold"/>
</dbReference>
<dbReference type="InterPro" id="IPR004150">
    <property type="entry name" value="NAD_DNA_ligase_OB"/>
</dbReference>
<dbReference type="InterPro" id="IPR010994">
    <property type="entry name" value="RuvA_2-like"/>
</dbReference>
<dbReference type="InterPro" id="IPR004149">
    <property type="entry name" value="Znf_DNAligase_C4"/>
</dbReference>
<dbReference type="NCBIfam" id="TIGR00575">
    <property type="entry name" value="dnlj"/>
    <property type="match status" value="1"/>
</dbReference>
<dbReference type="NCBIfam" id="NF005932">
    <property type="entry name" value="PRK07956.1"/>
    <property type="match status" value="1"/>
</dbReference>
<dbReference type="PANTHER" id="PTHR23389">
    <property type="entry name" value="CHROMOSOME TRANSMISSION FIDELITY FACTOR 18"/>
    <property type="match status" value="1"/>
</dbReference>
<dbReference type="PANTHER" id="PTHR23389:SF6">
    <property type="entry name" value="REPLICATION FACTOR C SUBUNIT 1"/>
    <property type="match status" value="1"/>
</dbReference>
<dbReference type="Pfam" id="PF00533">
    <property type="entry name" value="BRCT"/>
    <property type="match status" value="1"/>
</dbReference>
<dbReference type="Pfam" id="PF01653">
    <property type="entry name" value="DNA_ligase_aden"/>
    <property type="match status" value="1"/>
</dbReference>
<dbReference type="Pfam" id="PF03120">
    <property type="entry name" value="DNA_ligase_OB"/>
    <property type="match status" value="1"/>
</dbReference>
<dbReference type="Pfam" id="PF03119">
    <property type="entry name" value="DNA_ligase_ZBD"/>
    <property type="match status" value="1"/>
</dbReference>
<dbReference type="Pfam" id="PF12826">
    <property type="entry name" value="HHH_2"/>
    <property type="match status" value="1"/>
</dbReference>
<dbReference type="Pfam" id="PF14520">
    <property type="entry name" value="HHH_5"/>
    <property type="match status" value="1"/>
</dbReference>
<dbReference type="Pfam" id="PF22745">
    <property type="entry name" value="Nlig-Ia"/>
    <property type="match status" value="1"/>
</dbReference>
<dbReference type="PIRSF" id="PIRSF001604">
    <property type="entry name" value="LigA"/>
    <property type="match status" value="1"/>
</dbReference>
<dbReference type="SMART" id="SM00292">
    <property type="entry name" value="BRCT"/>
    <property type="match status" value="1"/>
</dbReference>
<dbReference type="SMART" id="SM00278">
    <property type="entry name" value="HhH1"/>
    <property type="match status" value="3"/>
</dbReference>
<dbReference type="SMART" id="SM00532">
    <property type="entry name" value="LIGANc"/>
    <property type="match status" value="1"/>
</dbReference>
<dbReference type="SUPFAM" id="SSF52113">
    <property type="entry name" value="BRCT domain"/>
    <property type="match status" value="1"/>
</dbReference>
<dbReference type="SUPFAM" id="SSF56091">
    <property type="entry name" value="DNA ligase/mRNA capping enzyme, catalytic domain"/>
    <property type="match status" value="1"/>
</dbReference>
<dbReference type="SUPFAM" id="SSF50249">
    <property type="entry name" value="Nucleic acid-binding proteins"/>
    <property type="match status" value="1"/>
</dbReference>
<dbReference type="SUPFAM" id="SSF47781">
    <property type="entry name" value="RuvA domain 2-like"/>
    <property type="match status" value="1"/>
</dbReference>
<dbReference type="PROSITE" id="PS50172">
    <property type="entry name" value="BRCT"/>
    <property type="match status" value="1"/>
</dbReference>
<dbReference type="PROSITE" id="PS01056">
    <property type="entry name" value="DNA_LIGASE_N2"/>
    <property type="match status" value="1"/>
</dbReference>
<name>DNLJ_KORVE</name>
<feature type="chain" id="PRO_0000313097" description="DNA ligase">
    <location>
        <begin position="1"/>
        <end position="673"/>
    </location>
</feature>
<feature type="domain" description="BRCT" evidence="1">
    <location>
        <begin position="595"/>
        <end position="673"/>
    </location>
</feature>
<feature type="active site" description="N6-AMP-lysine intermediate" evidence="1">
    <location>
        <position position="117"/>
    </location>
</feature>
<feature type="binding site" evidence="1">
    <location>
        <begin position="35"/>
        <end position="39"/>
    </location>
    <ligand>
        <name>NAD(+)</name>
        <dbReference type="ChEBI" id="CHEBI:57540"/>
    </ligand>
</feature>
<feature type="binding site" evidence="1">
    <location>
        <begin position="84"/>
        <end position="85"/>
    </location>
    <ligand>
        <name>NAD(+)</name>
        <dbReference type="ChEBI" id="CHEBI:57540"/>
    </ligand>
</feature>
<feature type="binding site" evidence="1">
    <location>
        <position position="115"/>
    </location>
    <ligand>
        <name>NAD(+)</name>
        <dbReference type="ChEBI" id="CHEBI:57540"/>
    </ligand>
</feature>
<feature type="binding site" evidence="1">
    <location>
        <position position="138"/>
    </location>
    <ligand>
        <name>NAD(+)</name>
        <dbReference type="ChEBI" id="CHEBI:57540"/>
    </ligand>
</feature>
<feature type="binding site" evidence="1">
    <location>
        <position position="180"/>
    </location>
    <ligand>
        <name>NAD(+)</name>
        <dbReference type="ChEBI" id="CHEBI:57540"/>
    </ligand>
</feature>
<feature type="binding site" evidence="1">
    <location>
        <position position="296"/>
    </location>
    <ligand>
        <name>NAD(+)</name>
        <dbReference type="ChEBI" id="CHEBI:57540"/>
    </ligand>
</feature>
<feature type="binding site" evidence="1">
    <location>
        <position position="320"/>
    </location>
    <ligand>
        <name>NAD(+)</name>
        <dbReference type="ChEBI" id="CHEBI:57540"/>
    </ligand>
</feature>
<feature type="binding site" evidence="1">
    <location>
        <position position="415"/>
    </location>
    <ligand>
        <name>Zn(2+)</name>
        <dbReference type="ChEBI" id="CHEBI:29105"/>
    </ligand>
</feature>
<feature type="binding site" evidence="1">
    <location>
        <position position="418"/>
    </location>
    <ligand>
        <name>Zn(2+)</name>
        <dbReference type="ChEBI" id="CHEBI:29105"/>
    </ligand>
</feature>
<feature type="binding site" evidence="1">
    <location>
        <position position="433"/>
    </location>
    <ligand>
        <name>Zn(2+)</name>
        <dbReference type="ChEBI" id="CHEBI:29105"/>
    </ligand>
</feature>
<feature type="binding site" evidence="1">
    <location>
        <position position="438"/>
    </location>
    <ligand>
        <name>Zn(2+)</name>
        <dbReference type="ChEBI" id="CHEBI:29105"/>
    </ligand>
</feature>
<accession>Q1IHJ4</accession>
<gene>
    <name evidence="1" type="primary">ligA</name>
    <name type="ordered locus">Acid345_4656</name>
</gene>
<protein>
    <recommendedName>
        <fullName evidence="1">DNA ligase</fullName>
        <ecNumber evidence="1">6.5.1.2</ecNumber>
    </recommendedName>
    <alternativeName>
        <fullName evidence="1">Polydeoxyribonucleotide synthase [NAD(+)]</fullName>
    </alternativeName>
</protein>
<reference key="1">
    <citation type="journal article" date="2009" name="Appl. Environ. Microbiol.">
        <title>Three genomes from the phylum Acidobacteria provide insight into the lifestyles of these microorganisms in soils.</title>
        <authorList>
            <person name="Ward N.L."/>
            <person name="Challacombe J.F."/>
            <person name="Janssen P.H."/>
            <person name="Henrissat B."/>
            <person name="Coutinho P.M."/>
            <person name="Wu M."/>
            <person name="Xie G."/>
            <person name="Haft D.H."/>
            <person name="Sait M."/>
            <person name="Badger J."/>
            <person name="Barabote R.D."/>
            <person name="Bradley B."/>
            <person name="Brettin T.S."/>
            <person name="Brinkac L.M."/>
            <person name="Bruce D."/>
            <person name="Creasy T."/>
            <person name="Daugherty S.C."/>
            <person name="Davidsen T.M."/>
            <person name="DeBoy R.T."/>
            <person name="Detter J.C."/>
            <person name="Dodson R.J."/>
            <person name="Durkin A.S."/>
            <person name="Ganapathy A."/>
            <person name="Gwinn-Giglio M."/>
            <person name="Han C.S."/>
            <person name="Khouri H."/>
            <person name="Kiss H."/>
            <person name="Kothari S.P."/>
            <person name="Madupu R."/>
            <person name="Nelson K.E."/>
            <person name="Nelson W.C."/>
            <person name="Paulsen I."/>
            <person name="Penn K."/>
            <person name="Ren Q."/>
            <person name="Rosovitz M.J."/>
            <person name="Selengut J.D."/>
            <person name="Shrivastava S."/>
            <person name="Sullivan S.A."/>
            <person name="Tapia R."/>
            <person name="Thompson L.S."/>
            <person name="Watkins K.L."/>
            <person name="Yang Q."/>
            <person name="Yu C."/>
            <person name="Zafar N."/>
            <person name="Zhou L."/>
            <person name="Kuske C.R."/>
        </authorList>
    </citation>
    <scope>NUCLEOTIDE SEQUENCE [LARGE SCALE GENOMIC DNA]</scope>
    <source>
        <strain>Ellin345</strain>
    </source>
</reference>
<evidence type="ECO:0000255" key="1">
    <source>
        <dbReference type="HAMAP-Rule" id="MF_01588"/>
    </source>
</evidence>